<dbReference type="EMBL" id="AF106329">
    <property type="protein sequence ID" value="AAD47183.1"/>
    <property type="molecule type" value="Genomic_DNA"/>
</dbReference>
<dbReference type="EMBL" id="AP001918">
    <property type="protein sequence ID" value="BAA97927.1"/>
    <property type="molecule type" value="Genomic_DNA"/>
</dbReference>
<dbReference type="RefSeq" id="NP_061436.1">
    <property type="nucleotide sequence ID" value="NC_002483.1"/>
</dbReference>
<dbReference type="RefSeq" id="WP_001198920.1">
    <property type="nucleotide sequence ID" value="NZ_JACEFS010000057.1"/>
</dbReference>
<dbReference type="SMR" id="Q9S4W7"/>
<dbReference type="KEGG" id="ecoc:C3026_24380"/>
<dbReference type="Gene3D" id="3.30.70.3580">
    <property type="entry name" value="Antirestriction protein"/>
    <property type="match status" value="1"/>
</dbReference>
<dbReference type="InterPro" id="IPR004914">
    <property type="entry name" value="Antirestrict"/>
</dbReference>
<dbReference type="InterPro" id="IPR042297">
    <property type="entry name" value="Antirestriction_sf"/>
</dbReference>
<dbReference type="Pfam" id="PF03230">
    <property type="entry name" value="Antirestrict"/>
    <property type="match status" value="1"/>
</dbReference>
<protein>
    <recommendedName>
        <fullName>Putative antirestriction protein YubI</fullName>
    </recommendedName>
</protein>
<feature type="chain" id="PRO_0000262308" description="Putative antirestriction protein YubI">
    <location>
        <begin position="1"/>
        <end position="141"/>
    </location>
</feature>
<name>YUBI_ECOLI</name>
<keyword id="KW-0614">Plasmid</keyword>
<organism>
    <name type="scientific">Escherichia coli (strain K12)</name>
    <dbReference type="NCBI Taxonomy" id="83333"/>
    <lineage>
        <taxon>Bacteria</taxon>
        <taxon>Pseudomonadati</taxon>
        <taxon>Pseudomonadota</taxon>
        <taxon>Gammaproteobacteria</taxon>
        <taxon>Enterobacterales</taxon>
        <taxon>Enterobacteriaceae</taxon>
        <taxon>Escherichia</taxon>
    </lineage>
</organism>
<geneLocation type="plasmid">
    <name>F</name>
</geneLocation>
<evidence type="ECO:0000305" key="1"/>
<reference key="1">
    <citation type="journal article" date="1999" name="Plasmid">
        <title>Nucleotide sequence of the F plasmid leading region.</title>
        <authorList>
            <person name="Manwaring N.P."/>
            <person name="Skurray R.A."/>
            <person name="Firth N."/>
        </authorList>
    </citation>
    <scope>NUCLEOTIDE SEQUENCE [GENOMIC DNA]</scope>
</reference>
<reference key="2">
    <citation type="submission" date="2000-04" db="EMBL/GenBank/DDBJ databases">
        <title>Complete nucleotide sequence of the F plasmid: its implications for organization and diversification of plasmid genomes.</title>
        <authorList>
            <person name="Shimizu H."/>
            <person name="Saitoh Y."/>
            <person name="Suda Y."/>
            <person name="Uehara K."/>
            <person name="Sampei G."/>
            <person name="Mizobuchi K."/>
        </authorList>
    </citation>
    <scope>NUCLEOTIDE SEQUENCE [LARGE SCALE GENOMIC DNA]</scope>
    <source>
        <strain>K12 / CR63</strain>
    </source>
</reference>
<proteinExistence type="inferred from homology"/>
<accession>Q9S4W7</accession>
<accession>Q7AJQ1</accession>
<gene>
    <name type="primary">yubI</name>
    <name type="synonym">yfgB</name>
    <name type="ordered locus">ECOK12F057</name>
</gene>
<sequence>MQYAKPVTLNVEECDRLSFLPYLFGNDFLYAEAYVYALAQKMMPEYQGGFWHFIRLPDGGGYMMPDGDRFHLVNGENWFDRTVSADAAGIILTSLVINRQLWLYHDSGDVGLTQLYRMRDAQLWRHIEFHPECNAIYAALD</sequence>
<comment type="similarity">
    <text evidence="1">Belongs to the antirestriction protein family.</text>
</comment>